<reference key="1">
    <citation type="submission" date="2007-12" db="EMBL/GenBank/DDBJ databases">
        <title>Brucella suis ATCC 23445 whole genome shotgun sequencing project.</title>
        <authorList>
            <person name="Setubal J.C."/>
            <person name="Bowns C."/>
            <person name="Boyle S."/>
            <person name="Crasta O.R."/>
            <person name="Czar M.J."/>
            <person name="Dharmanolla C."/>
            <person name="Gillespie J.J."/>
            <person name="Kenyon R.W."/>
            <person name="Lu J."/>
            <person name="Mane S."/>
            <person name="Mohapatra S."/>
            <person name="Nagrani S."/>
            <person name="Purkayastha A."/>
            <person name="Rajasimha H.K."/>
            <person name="Shallom J.M."/>
            <person name="Shallom S."/>
            <person name="Shukla M."/>
            <person name="Snyder E.E."/>
            <person name="Sobral B.W."/>
            <person name="Wattam A.R."/>
            <person name="Will R."/>
            <person name="Williams K."/>
            <person name="Yoo H."/>
            <person name="Bruce D."/>
            <person name="Detter C."/>
            <person name="Munk C."/>
            <person name="Brettin T.S."/>
        </authorList>
    </citation>
    <scope>NUCLEOTIDE SEQUENCE [LARGE SCALE GENOMIC DNA]</scope>
    <source>
        <strain>ATCC 23445 / NCTC 10510</strain>
    </source>
</reference>
<name>ISPG_BRUSI</name>
<evidence type="ECO:0000255" key="1">
    <source>
        <dbReference type="HAMAP-Rule" id="MF_00159"/>
    </source>
</evidence>
<dbReference type="EC" id="1.17.7.3" evidence="1"/>
<dbReference type="EMBL" id="CP000912">
    <property type="protein sequence ID" value="ABY40188.1"/>
    <property type="molecule type" value="Genomic_DNA"/>
</dbReference>
<dbReference type="RefSeq" id="WP_006074529.1">
    <property type="nucleotide sequence ID" value="NC_010167.1"/>
</dbReference>
<dbReference type="SMR" id="A9WWQ2"/>
<dbReference type="KEGG" id="bmt:BSUIS_B1254"/>
<dbReference type="HOGENOM" id="CLU_042258_1_0_5"/>
<dbReference type="UniPathway" id="UPA00056">
    <property type="reaction ID" value="UER00096"/>
</dbReference>
<dbReference type="Proteomes" id="UP000008545">
    <property type="component" value="Chromosome II"/>
</dbReference>
<dbReference type="GO" id="GO:0051539">
    <property type="term" value="F:4 iron, 4 sulfur cluster binding"/>
    <property type="evidence" value="ECO:0007669"/>
    <property type="project" value="UniProtKB-UniRule"/>
</dbReference>
<dbReference type="GO" id="GO:0046429">
    <property type="term" value="F:4-hydroxy-3-methylbut-2-en-1-yl diphosphate synthase activity (ferredoxin)"/>
    <property type="evidence" value="ECO:0007669"/>
    <property type="project" value="UniProtKB-UniRule"/>
</dbReference>
<dbReference type="GO" id="GO:0141197">
    <property type="term" value="F:4-hydroxy-3-methylbut-2-enyl-diphosphate synthase activity (flavodoxin)"/>
    <property type="evidence" value="ECO:0007669"/>
    <property type="project" value="UniProtKB-EC"/>
</dbReference>
<dbReference type="GO" id="GO:0005506">
    <property type="term" value="F:iron ion binding"/>
    <property type="evidence" value="ECO:0007669"/>
    <property type="project" value="InterPro"/>
</dbReference>
<dbReference type="GO" id="GO:0019288">
    <property type="term" value="P:isopentenyl diphosphate biosynthetic process, methylerythritol 4-phosphate pathway"/>
    <property type="evidence" value="ECO:0007669"/>
    <property type="project" value="UniProtKB-UniRule"/>
</dbReference>
<dbReference type="GO" id="GO:0016114">
    <property type="term" value="P:terpenoid biosynthetic process"/>
    <property type="evidence" value="ECO:0007669"/>
    <property type="project" value="InterPro"/>
</dbReference>
<dbReference type="FunFam" id="3.30.413.10:FF:000012">
    <property type="entry name" value="4-hydroxy-3-methylbut-2-en-1-yl diphosphate synthase (flavodoxin)"/>
    <property type="match status" value="1"/>
</dbReference>
<dbReference type="Gene3D" id="3.20.20.20">
    <property type="entry name" value="Dihydropteroate synthase-like"/>
    <property type="match status" value="1"/>
</dbReference>
<dbReference type="Gene3D" id="3.30.413.10">
    <property type="entry name" value="Sulfite Reductase Hemoprotein, domain 1"/>
    <property type="match status" value="1"/>
</dbReference>
<dbReference type="HAMAP" id="MF_00159">
    <property type="entry name" value="IspG"/>
    <property type="match status" value="1"/>
</dbReference>
<dbReference type="InterPro" id="IPR011005">
    <property type="entry name" value="Dihydropteroate_synth-like_sf"/>
</dbReference>
<dbReference type="InterPro" id="IPR016425">
    <property type="entry name" value="IspG_bac"/>
</dbReference>
<dbReference type="InterPro" id="IPR004588">
    <property type="entry name" value="IspG_bac-typ"/>
</dbReference>
<dbReference type="InterPro" id="IPR045854">
    <property type="entry name" value="NO2/SO3_Rdtase_4Fe4S_sf"/>
</dbReference>
<dbReference type="NCBIfam" id="TIGR00612">
    <property type="entry name" value="ispG_gcpE"/>
    <property type="match status" value="1"/>
</dbReference>
<dbReference type="NCBIfam" id="NF001540">
    <property type="entry name" value="PRK00366.1"/>
    <property type="match status" value="1"/>
</dbReference>
<dbReference type="PANTHER" id="PTHR30454">
    <property type="entry name" value="4-HYDROXY-3-METHYLBUT-2-EN-1-YL DIPHOSPHATE SYNTHASE"/>
    <property type="match status" value="1"/>
</dbReference>
<dbReference type="PANTHER" id="PTHR30454:SF0">
    <property type="entry name" value="4-HYDROXY-3-METHYLBUT-2-EN-1-YL DIPHOSPHATE SYNTHASE (FERREDOXIN), CHLOROPLASTIC"/>
    <property type="match status" value="1"/>
</dbReference>
<dbReference type="Pfam" id="PF04551">
    <property type="entry name" value="GcpE"/>
    <property type="match status" value="1"/>
</dbReference>
<dbReference type="PIRSF" id="PIRSF004640">
    <property type="entry name" value="IspG"/>
    <property type="match status" value="1"/>
</dbReference>
<dbReference type="SUPFAM" id="SSF56014">
    <property type="entry name" value="Nitrite and sulphite reductase 4Fe-4S domain-like"/>
    <property type="match status" value="1"/>
</dbReference>
<feature type="chain" id="PRO_1000076879" description="4-hydroxy-3-methylbut-2-en-1-yl diphosphate synthase (flavodoxin)">
    <location>
        <begin position="1"/>
        <end position="420"/>
    </location>
</feature>
<feature type="binding site" evidence="1">
    <location>
        <position position="307"/>
    </location>
    <ligand>
        <name>[4Fe-4S] cluster</name>
        <dbReference type="ChEBI" id="CHEBI:49883"/>
    </ligand>
</feature>
<feature type="binding site" evidence="1">
    <location>
        <position position="310"/>
    </location>
    <ligand>
        <name>[4Fe-4S] cluster</name>
        <dbReference type="ChEBI" id="CHEBI:49883"/>
    </ligand>
</feature>
<feature type="binding site" evidence="1">
    <location>
        <position position="353"/>
    </location>
    <ligand>
        <name>[4Fe-4S] cluster</name>
        <dbReference type="ChEBI" id="CHEBI:49883"/>
    </ligand>
</feature>
<feature type="binding site" evidence="1">
    <location>
        <position position="360"/>
    </location>
    <ligand>
        <name>[4Fe-4S] cluster</name>
        <dbReference type="ChEBI" id="CHEBI:49883"/>
    </ligand>
</feature>
<comment type="function">
    <text evidence="1">Converts 2C-methyl-D-erythritol 2,4-cyclodiphosphate (ME-2,4cPP) into 1-hydroxy-2-methyl-2-(E)-butenyl 4-diphosphate.</text>
</comment>
<comment type="catalytic activity">
    <reaction evidence="1">
        <text>(2E)-4-hydroxy-3-methylbut-2-enyl diphosphate + oxidized [flavodoxin] + H2O + 2 H(+) = 2-C-methyl-D-erythritol 2,4-cyclic diphosphate + reduced [flavodoxin]</text>
        <dbReference type="Rhea" id="RHEA:43604"/>
        <dbReference type="Rhea" id="RHEA-COMP:10622"/>
        <dbReference type="Rhea" id="RHEA-COMP:10623"/>
        <dbReference type="ChEBI" id="CHEBI:15377"/>
        <dbReference type="ChEBI" id="CHEBI:15378"/>
        <dbReference type="ChEBI" id="CHEBI:57618"/>
        <dbReference type="ChEBI" id="CHEBI:58210"/>
        <dbReference type="ChEBI" id="CHEBI:58483"/>
        <dbReference type="ChEBI" id="CHEBI:128753"/>
        <dbReference type="EC" id="1.17.7.3"/>
    </reaction>
</comment>
<comment type="cofactor">
    <cofactor evidence="1">
        <name>[4Fe-4S] cluster</name>
        <dbReference type="ChEBI" id="CHEBI:49883"/>
    </cofactor>
    <text evidence="1">Binds 1 [4Fe-4S] cluster.</text>
</comment>
<comment type="pathway">
    <text evidence="1">Isoprenoid biosynthesis; isopentenyl diphosphate biosynthesis via DXP pathway; isopentenyl diphosphate from 1-deoxy-D-xylulose 5-phosphate: step 5/6.</text>
</comment>
<comment type="similarity">
    <text evidence="1">Belongs to the IspG family.</text>
</comment>
<accession>A9WWQ2</accession>
<keyword id="KW-0004">4Fe-4S</keyword>
<keyword id="KW-0408">Iron</keyword>
<keyword id="KW-0411">Iron-sulfur</keyword>
<keyword id="KW-0414">Isoprene biosynthesis</keyword>
<keyword id="KW-0479">Metal-binding</keyword>
<keyword id="KW-0560">Oxidoreductase</keyword>
<sequence>MSSETVSYFSHPFPRRQSVGVSVGGVIVGGSAPVVVQSMTNTDTADVDSTVAQVVALHRAGSEIVRITVDRDESAAAVPKIRERLERLGHDVPLVGDFHYIGHKLLADHPACAEALAKYRINPGNVGFKDKKDKQFADIVEMAIRYDKPVRIGVNWGSLDQELLTTLMDRNQAEGAPLSAQDVMREAIVQSALISANLAEEIGLGRDKIILSAKVSQVQDLIAVYTMLAQRSNHALHLGLTEAGMGTKGIVASSAAMGILLQQGIGDTIRISLTPEPGGDRTREVQVAQELLQTMGFRQFVPIVAACPGCGRTTSTVFQELAQTIQEDIRRNMPLWREKYPGVEALSVAVMGCIVNGPGESKHADIGISLPGTGETPSAPVFVDGKKVATLRGPGIAEDFQKMVADYIENRFGLGRKIAS</sequence>
<protein>
    <recommendedName>
        <fullName evidence="1">4-hydroxy-3-methylbut-2-en-1-yl diphosphate synthase (flavodoxin)</fullName>
        <ecNumber evidence="1">1.17.7.3</ecNumber>
    </recommendedName>
    <alternativeName>
        <fullName evidence="1">1-hydroxy-2-methyl-2-(E)-butenyl 4-diphosphate synthase</fullName>
    </alternativeName>
</protein>
<gene>
    <name evidence="1" type="primary">ispG</name>
    <name type="ordered locus">BSUIS_B1254</name>
</gene>
<organism>
    <name type="scientific">Brucella suis (strain ATCC 23445 / NCTC 10510)</name>
    <dbReference type="NCBI Taxonomy" id="470137"/>
    <lineage>
        <taxon>Bacteria</taxon>
        <taxon>Pseudomonadati</taxon>
        <taxon>Pseudomonadota</taxon>
        <taxon>Alphaproteobacteria</taxon>
        <taxon>Hyphomicrobiales</taxon>
        <taxon>Brucellaceae</taxon>
        <taxon>Brucella/Ochrobactrum group</taxon>
        <taxon>Brucella</taxon>
    </lineage>
</organism>
<proteinExistence type="inferred from homology"/>